<proteinExistence type="evidence at transcript level"/>
<name>PR20A_HUMAN</name>
<evidence type="ECO:0000256" key="1">
    <source>
        <dbReference type="SAM" id="MobiDB-lite"/>
    </source>
</evidence>
<evidence type="ECO:0000305" key="2"/>
<comment type="similarity">
    <text evidence="2">Belongs to the PRR20 family.</text>
</comment>
<protein>
    <recommendedName>
        <fullName evidence="2">Proline-rich protein 20A</fullName>
    </recommendedName>
</protein>
<dbReference type="EMBL" id="AK097615">
    <property type="status" value="NOT_ANNOTATED_CDS"/>
    <property type="molecule type" value="mRNA"/>
</dbReference>
<dbReference type="EMBL" id="AL353652">
    <property type="status" value="NOT_ANNOTATED_CDS"/>
    <property type="molecule type" value="Genomic_DNA"/>
</dbReference>
<dbReference type="EMBL" id="BC120931">
    <property type="protein sequence ID" value="AAI20932.1"/>
    <property type="molecule type" value="mRNA"/>
</dbReference>
<dbReference type="EMBL" id="BC120932">
    <property type="protein sequence ID" value="AAI20933.1"/>
    <property type="molecule type" value="mRNA"/>
</dbReference>
<dbReference type="CCDS" id="CCDS31981.1"/>
<dbReference type="RefSeq" id="NP_001123876.1">
    <property type="nucleotide sequence ID" value="NM_001130404.1"/>
</dbReference>
<dbReference type="RefSeq" id="NP_001123877.1">
    <property type="nucleotide sequence ID" value="NM_001130405.1"/>
</dbReference>
<dbReference type="RefSeq" id="NP_001123878.1">
    <property type="nucleotide sequence ID" value="NM_001130406.1"/>
</dbReference>
<dbReference type="RefSeq" id="NP_001123879.1">
    <property type="nucleotide sequence ID" value="NM_001130407.1"/>
</dbReference>
<dbReference type="RefSeq" id="NP_940843.1">
    <property type="nucleotide sequence ID" value="NM_198441.2"/>
</dbReference>
<dbReference type="RefSeq" id="XP_016855016.1">
    <property type="nucleotide sequence ID" value="XM_016999527.1"/>
</dbReference>
<dbReference type="BioGRID" id="125761">
    <property type="interactions" value="149"/>
</dbReference>
<dbReference type="BioGRID" id="609637">
    <property type="interactions" value="90"/>
</dbReference>
<dbReference type="BioGRID" id="609643">
    <property type="interactions" value="90"/>
</dbReference>
<dbReference type="BioGRID" id="609649">
    <property type="interactions" value="90"/>
</dbReference>
<dbReference type="BioGRID" id="609653">
    <property type="interactions" value="101"/>
</dbReference>
<dbReference type="STRING" id="9606.ENSP00000367163"/>
<dbReference type="iPTMnet" id="P86496"/>
<dbReference type="PhosphoSitePlus" id="P86496"/>
<dbReference type="BioMuta" id="PRR20A"/>
<dbReference type="PaxDb" id="9606-ENSP00000367163"/>
<dbReference type="Antibodypedia" id="67109">
    <property type="antibodies" value="13 antibodies from 6 providers"/>
</dbReference>
<dbReference type="DNASU" id="122183"/>
<dbReference type="Ensembl" id="ENST00000377931.1">
    <property type="protein sequence ID" value="ENSP00000367164.1"/>
    <property type="gene ID" value="ENSG00000204919.1"/>
</dbReference>
<dbReference type="GeneID" id="122183"/>
<dbReference type="GeneID" id="729233"/>
<dbReference type="GeneID" id="729240"/>
<dbReference type="GeneID" id="729246"/>
<dbReference type="GeneID" id="729250"/>
<dbReference type="KEGG" id="hsa:122183"/>
<dbReference type="KEGG" id="hsa:729233"/>
<dbReference type="KEGG" id="hsa:729240"/>
<dbReference type="KEGG" id="hsa:729246"/>
<dbReference type="KEGG" id="hsa:729250"/>
<dbReference type="MANE-Select" id="ENST00000377931.1">
    <property type="protein sequence ID" value="ENSP00000367164.1"/>
    <property type="RefSeq nucleotide sequence ID" value="NM_198441.2"/>
    <property type="RefSeq protein sequence ID" value="NP_940843.1"/>
</dbReference>
<dbReference type="UCSC" id="uc010thd.1">
    <property type="organism name" value="human"/>
</dbReference>
<dbReference type="AGR" id="HGNC:24754"/>
<dbReference type="AGR" id="HGNC:37220"/>
<dbReference type="AGR" id="HGNC:37221"/>
<dbReference type="AGR" id="HGNC:37222"/>
<dbReference type="AGR" id="HGNC:37223"/>
<dbReference type="CTD" id="122183"/>
<dbReference type="CTD" id="729233"/>
<dbReference type="CTD" id="729240"/>
<dbReference type="CTD" id="729246"/>
<dbReference type="CTD" id="729250"/>
<dbReference type="DisGeNET" id="122183"/>
<dbReference type="GeneCards" id="PRR20A"/>
<dbReference type="HGNC" id="HGNC:24754">
    <property type="gene designation" value="PRR20A"/>
</dbReference>
<dbReference type="HPA" id="ENSG00000204919">
    <property type="expression patterns" value="Not detected"/>
</dbReference>
<dbReference type="neXtProt" id="NX_P86496"/>
<dbReference type="OpenTargets" id="ENSG00000204919"/>
<dbReference type="PharmGKB" id="PA165505473"/>
<dbReference type="VEuPathDB" id="HostDB:ENSG00000204919"/>
<dbReference type="eggNOG" id="ENOG502TFGJ">
    <property type="taxonomic scope" value="Eukaryota"/>
</dbReference>
<dbReference type="GeneTree" id="ENSGT00390000001542"/>
<dbReference type="HOGENOM" id="CLU_117010_0_0_1"/>
<dbReference type="InParanoid" id="P86496"/>
<dbReference type="OMA" id="GRPTEPF"/>
<dbReference type="OrthoDB" id="9539181at2759"/>
<dbReference type="PAN-GO" id="P86496">
    <property type="GO annotations" value="0 GO annotations based on evolutionary models"/>
</dbReference>
<dbReference type="PhylomeDB" id="P86496"/>
<dbReference type="TreeFam" id="TF341860"/>
<dbReference type="PathwayCommons" id="P86496"/>
<dbReference type="BioGRID-ORCS" id="122183">
    <property type="hits" value="16 hits in 607 CRISPR screens"/>
</dbReference>
<dbReference type="BioGRID-ORCS" id="729233">
    <property type="hits" value="7 hits in 187 CRISPR screens"/>
</dbReference>
<dbReference type="BioGRID-ORCS" id="729240">
    <property type="hits" value="7 hits in 183 CRISPR screens"/>
</dbReference>
<dbReference type="BioGRID-ORCS" id="729246">
    <property type="hits" value="10 hits in 193 CRISPR screens"/>
</dbReference>
<dbReference type="BioGRID-ORCS" id="729250">
    <property type="hits" value="10 hits in 226 CRISPR screens"/>
</dbReference>
<dbReference type="Pharos" id="P86496">
    <property type="development level" value="Tdark"/>
</dbReference>
<dbReference type="PRO" id="PR:P86496"/>
<dbReference type="Proteomes" id="UP000005640">
    <property type="component" value="Chromosome 13"/>
</dbReference>
<dbReference type="RNAct" id="P86496">
    <property type="molecule type" value="protein"/>
</dbReference>
<dbReference type="Bgee" id="ENSG00000204919">
    <property type="expression patterns" value="Expressed in primordial germ cell in gonad"/>
</dbReference>
<dbReference type="InterPro" id="IPR031439">
    <property type="entry name" value="PRR20"/>
</dbReference>
<dbReference type="PANTHER" id="PTHR38819">
    <property type="entry name" value="PROLINE-RICH PROTEIN 20A-RELATED"/>
    <property type="match status" value="1"/>
</dbReference>
<dbReference type="PANTHER" id="PTHR38819:SF2">
    <property type="entry name" value="PROLINE-RICH PROTEIN 20A-RELATED"/>
    <property type="match status" value="1"/>
</dbReference>
<dbReference type="Pfam" id="PF15708">
    <property type="entry name" value="PRR20"/>
    <property type="match status" value="1"/>
</dbReference>
<reference key="1">
    <citation type="journal article" date="2004" name="Nat. Genet.">
        <title>Complete sequencing and characterization of 21,243 full-length human cDNAs.</title>
        <authorList>
            <person name="Ota T."/>
            <person name="Suzuki Y."/>
            <person name="Nishikawa T."/>
            <person name="Otsuki T."/>
            <person name="Sugiyama T."/>
            <person name="Irie R."/>
            <person name="Wakamatsu A."/>
            <person name="Hayashi K."/>
            <person name="Sato H."/>
            <person name="Nagai K."/>
            <person name="Kimura K."/>
            <person name="Makita H."/>
            <person name="Sekine M."/>
            <person name="Obayashi M."/>
            <person name="Nishi T."/>
            <person name="Shibahara T."/>
            <person name="Tanaka T."/>
            <person name="Ishii S."/>
            <person name="Yamamoto J."/>
            <person name="Saito K."/>
            <person name="Kawai Y."/>
            <person name="Isono Y."/>
            <person name="Nakamura Y."/>
            <person name="Nagahari K."/>
            <person name="Murakami K."/>
            <person name="Yasuda T."/>
            <person name="Iwayanagi T."/>
            <person name="Wagatsuma M."/>
            <person name="Shiratori A."/>
            <person name="Sudo H."/>
            <person name="Hosoiri T."/>
            <person name="Kaku Y."/>
            <person name="Kodaira H."/>
            <person name="Kondo H."/>
            <person name="Sugawara M."/>
            <person name="Takahashi M."/>
            <person name="Kanda K."/>
            <person name="Yokoi T."/>
            <person name="Furuya T."/>
            <person name="Kikkawa E."/>
            <person name="Omura Y."/>
            <person name="Abe K."/>
            <person name="Kamihara K."/>
            <person name="Katsuta N."/>
            <person name="Sato K."/>
            <person name="Tanikawa M."/>
            <person name="Yamazaki M."/>
            <person name="Ninomiya K."/>
            <person name="Ishibashi T."/>
            <person name="Yamashita H."/>
            <person name="Murakawa K."/>
            <person name="Fujimori K."/>
            <person name="Tanai H."/>
            <person name="Kimata M."/>
            <person name="Watanabe M."/>
            <person name="Hiraoka S."/>
            <person name="Chiba Y."/>
            <person name="Ishida S."/>
            <person name="Ono Y."/>
            <person name="Takiguchi S."/>
            <person name="Watanabe S."/>
            <person name="Yosida M."/>
            <person name="Hotuta T."/>
            <person name="Kusano J."/>
            <person name="Kanehori K."/>
            <person name="Takahashi-Fujii A."/>
            <person name="Hara H."/>
            <person name="Tanase T.-O."/>
            <person name="Nomura Y."/>
            <person name="Togiya S."/>
            <person name="Komai F."/>
            <person name="Hara R."/>
            <person name="Takeuchi K."/>
            <person name="Arita M."/>
            <person name="Imose N."/>
            <person name="Musashino K."/>
            <person name="Yuuki H."/>
            <person name="Oshima A."/>
            <person name="Sasaki N."/>
            <person name="Aotsuka S."/>
            <person name="Yoshikawa Y."/>
            <person name="Matsunawa H."/>
            <person name="Ichihara T."/>
            <person name="Shiohata N."/>
            <person name="Sano S."/>
            <person name="Moriya S."/>
            <person name="Momiyama H."/>
            <person name="Satoh N."/>
            <person name="Takami S."/>
            <person name="Terashima Y."/>
            <person name="Suzuki O."/>
            <person name="Nakagawa S."/>
            <person name="Senoh A."/>
            <person name="Mizoguchi H."/>
            <person name="Goto Y."/>
            <person name="Shimizu F."/>
            <person name="Wakebe H."/>
            <person name="Hishigaki H."/>
            <person name="Watanabe T."/>
            <person name="Sugiyama A."/>
            <person name="Takemoto M."/>
            <person name="Kawakami B."/>
            <person name="Yamazaki M."/>
            <person name="Watanabe K."/>
            <person name="Kumagai A."/>
            <person name="Itakura S."/>
            <person name="Fukuzumi Y."/>
            <person name="Fujimori Y."/>
            <person name="Komiyama M."/>
            <person name="Tashiro H."/>
            <person name="Tanigami A."/>
            <person name="Fujiwara T."/>
            <person name="Ono T."/>
            <person name="Yamada K."/>
            <person name="Fujii Y."/>
            <person name="Ozaki K."/>
            <person name="Hirao M."/>
            <person name="Ohmori Y."/>
            <person name="Kawabata A."/>
            <person name="Hikiji T."/>
            <person name="Kobatake N."/>
            <person name="Inagaki H."/>
            <person name="Ikema Y."/>
            <person name="Okamoto S."/>
            <person name="Okitani R."/>
            <person name="Kawakami T."/>
            <person name="Noguchi S."/>
            <person name="Itoh T."/>
            <person name="Shigeta K."/>
            <person name="Senba T."/>
            <person name="Matsumura K."/>
            <person name="Nakajima Y."/>
            <person name="Mizuno T."/>
            <person name="Morinaga M."/>
            <person name="Sasaki M."/>
            <person name="Togashi T."/>
            <person name="Oyama M."/>
            <person name="Hata H."/>
            <person name="Watanabe M."/>
            <person name="Komatsu T."/>
            <person name="Mizushima-Sugano J."/>
            <person name="Satoh T."/>
            <person name="Shirai Y."/>
            <person name="Takahashi Y."/>
            <person name="Nakagawa K."/>
            <person name="Okumura K."/>
            <person name="Nagase T."/>
            <person name="Nomura N."/>
            <person name="Kikuchi H."/>
            <person name="Masuho Y."/>
            <person name="Yamashita R."/>
            <person name="Nakai K."/>
            <person name="Yada T."/>
            <person name="Nakamura Y."/>
            <person name="Ohara O."/>
            <person name="Isogai T."/>
            <person name="Sugano S."/>
        </authorList>
    </citation>
    <scope>NUCLEOTIDE SEQUENCE [LARGE SCALE MRNA]</scope>
    <source>
        <tissue>Testis</tissue>
    </source>
</reference>
<reference key="2">
    <citation type="journal article" date="2004" name="Nature">
        <title>The DNA sequence and analysis of human chromosome 13.</title>
        <authorList>
            <person name="Dunham A."/>
            <person name="Matthews L.H."/>
            <person name="Burton J."/>
            <person name="Ashurst J.L."/>
            <person name="Howe K.L."/>
            <person name="Ashcroft K.J."/>
            <person name="Beare D.M."/>
            <person name="Burford D.C."/>
            <person name="Hunt S.E."/>
            <person name="Griffiths-Jones S."/>
            <person name="Jones M.C."/>
            <person name="Keenan S.J."/>
            <person name="Oliver K."/>
            <person name="Scott C.E."/>
            <person name="Ainscough R."/>
            <person name="Almeida J.P."/>
            <person name="Ambrose K.D."/>
            <person name="Andrews D.T."/>
            <person name="Ashwell R.I.S."/>
            <person name="Babbage A.K."/>
            <person name="Bagguley C.L."/>
            <person name="Bailey J."/>
            <person name="Bannerjee R."/>
            <person name="Barlow K.F."/>
            <person name="Bates K."/>
            <person name="Beasley H."/>
            <person name="Bird C.P."/>
            <person name="Bray-Allen S."/>
            <person name="Brown A.J."/>
            <person name="Brown J.Y."/>
            <person name="Burrill W."/>
            <person name="Carder C."/>
            <person name="Carter N.P."/>
            <person name="Chapman J.C."/>
            <person name="Clamp M.E."/>
            <person name="Clark S.Y."/>
            <person name="Clarke G."/>
            <person name="Clee C.M."/>
            <person name="Clegg S.C."/>
            <person name="Cobley V."/>
            <person name="Collins J.E."/>
            <person name="Corby N."/>
            <person name="Coville G.J."/>
            <person name="Deloukas P."/>
            <person name="Dhami P."/>
            <person name="Dunham I."/>
            <person name="Dunn M."/>
            <person name="Earthrowl M.E."/>
            <person name="Ellington A.G."/>
            <person name="Faulkner L."/>
            <person name="Frankish A.G."/>
            <person name="Frankland J."/>
            <person name="French L."/>
            <person name="Garner P."/>
            <person name="Garnett J."/>
            <person name="Gilbert J.G.R."/>
            <person name="Gilson C.J."/>
            <person name="Ghori J."/>
            <person name="Grafham D.V."/>
            <person name="Gribble S.M."/>
            <person name="Griffiths C."/>
            <person name="Hall R.E."/>
            <person name="Hammond S."/>
            <person name="Harley J.L."/>
            <person name="Hart E.A."/>
            <person name="Heath P.D."/>
            <person name="Howden P.J."/>
            <person name="Huckle E.J."/>
            <person name="Hunt P.J."/>
            <person name="Hunt A.R."/>
            <person name="Johnson C."/>
            <person name="Johnson D."/>
            <person name="Kay M."/>
            <person name="Kimberley A.M."/>
            <person name="King A."/>
            <person name="Laird G.K."/>
            <person name="Langford C.J."/>
            <person name="Lawlor S."/>
            <person name="Leongamornlert D.A."/>
            <person name="Lloyd D.M."/>
            <person name="Lloyd C."/>
            <person name="Loveland J.E."/>
            <person name="Lovell J."/>
            <person name="Martin S."/>
            <person name="Mashreghi-Mohammadi M."/>
            <person name="McLaren S.J."/>
            <person name="McMurray A."/>
            <person name="Milne S."/>
            <person name="Moore M.J.F."/>
            <person name="Nickerson T."/>
            <person name="Palmer S.A."/>
            <person name="Pearce A.V."/>
            <person name="Peck A.I."/>
            <person name="Pelan S."/>
            <person name="Phillimore B."/>
            <person name="Porter K.M."/>
            <person name="Rice C.M."/>
            <person name="Searle S."/>
            <person name="Sehra H.K."/>
            <person name="Shownkeen R."/>
            <person name="Skuce C.D."/>
            <person name="Smith M."/>
            <person name="Steward C.A."/>
            <person name="Sycamore N."/>
            <person name="Tester J."/>
            <person name="Thomas D.W."/>
            <person name="Tracey A."/>
            <person name="Tromans A."/>
            <person name="Tubby B."/>
            <person name="Wall M."/>
            <person name="Wallis J.M."/>
            <person name="West A.P."/>
            <person name="Whitehead S.L."/>
            <person name="Willey D.L."/>
            <person name="Wilming L."/>
            <person name="Wray P.W."/>
            <person name="Wright M.W."/>
            <person name="Young L."/>
            <person name="Coulson A."/>
            <person name="Durbin R.M."/>
            <person name="Hubbard T."/>
            <person name="Sulston J.E."/>
            <person name="Beck S."/>
            <person name="Bentley D.R."/>
            <person name="Rogers J."/>
            <person name="Ross M.T."/>
        </authorList>
    </citation>
    <scope>NUCLEOTIDE SEQUENCE [LARGE SCALE GENOMIC DNA]</scope>
</reference>
<reference key="3">
    <citation type="journal article" date="2004" name="Genome Res.">
        <title>The status, quality, and expansion of the NIH full-length cDNA project: the Mammalian Gene Collection (MGC).</title>
        <authorList>
            <consortium name="The MGC Project Team"/>
        </authorList>
    </citation>
    <scope>NUCLEOTIDE SEQUENCE [LARGE SCALE MRNA]</scope>
</reference>
<organism>
    <name type="scientific">Homo sapiens</name>
    <name type="common">Human</name>
    <dbReference type="NCBI Taxonomy" id="9606"/>
    <lineage>
        <taxon>Eukaryota</taxon>
        <taxon>Metazoa</taxon>
        <taxon>Chordata</taxon>
        <taxon>Craniata</taxon>
        <taxon>Vertebrata</taxon>
        <taxon>Euteleostomi</taxon>
        <taxon>Mammalia</taxon>
        <taxon>Eutheria</taxon>
        <taxon>Euarchontoglires</taxon>
        <taxon>Primates</taxon>
        <taxon>Haplorrhini</taxon>
        <taxon>Catarrhini</taxon>
        <taxon>Hominidae</taxon>
        <taxon>Homo</taxon>
    </lineage>
</organism>
<sequence>MEEPRPSKRLRSMAPNQASGGPPPEPGCCVADPEGSVEADGPAQPAQPAKPIAYVKPFRRQPPARPESPPPAERGRRRGGSRRPGRGRGRRAGPRGDAGQRQGAEGLMAPDVHIQLDHHGEPGHQGEPEITETAAFSLSETGPPPGTVQEGPGPDVAQPELGFQEPPAAPGPQAVDWQPVLTLYPCIGFRALGDSAVLQVIQTPQGTYVQGVPVFLTDIAY</sequence>
<accession>P86496</accession>
<accession>Q8N7V5</accession>
<keyword id="KW-1185">Reference proteome</keyword>
<gene>
    <name type="primary">PRR20A</name>
    <name type="synonym">PRR20</name>
</gene>
<feature type="chain" id="PRO_0000336092" description="Proline-rich protein 20A">
    <location>
        <begin position="1"/>
        <end position="221"/>
    </location>
</feature>
<feature type="region of interest" description="Disordered" evidence="1">
    <location>
        <begin position="1"/>
        <end position="103"/>
    </location>
</feature>
<feature type="region of interest" description="Disordered" evidence="1">
    <location>
        <begin position="137"/>
        <end position="174"/>
    </location>
</feature>
<feature type="compositionally biased region" description="Low complexity" evidence="1">
    <location>
        <begin position="42"/>
        <end position="53"/>
    </location>
</feature>
<feature type="compositionally biased region" description="Pro residues" evidence="1">
    <location>
        <begin position="63"/>
        <end position="72"/>
    </location>
</feature>
<feature type="compositionally biased region" description="Basic residues" evidence="1">
    <location>
        <begin position="75"/>
        <end position="93"/>
    </location>
</feature>